<proteinExistence type="inferred from homology"/>
<accession>Q8F7J8</accession>
<feature type="chain" id="PRO_0000329699" description="Polyribonucleotide nucleotidyltransferase">
    <location>
        <begin position="1"/>
        <end position="698"/>
    </location>
</feature>
<feature type="domain" description="KH" evidence="1">
    <location>
        <begin position="553"/>
        <end position="612"/>
    </location>
</feature>
<feature type="domain" description="S1 motif" evidence="1">
    <location>
        <begin position="622"/>
        <end position="690"/>
    </location>
</feature>
<feature type="binding site" evidence="1">
    <location>
        <position position="486"/>
    </location>
    <ligand>
        <name>Mg(2+)</name>
        <dbReference type="ChEBI" id="CHEBI:18420"/>
    </ligand>
</feature>
<feature type="binding site" evidence="1">
    <location>
        <position position="492"/>
    </location>
    <ligand>
        <name>Mg(2+)</name>
        <dbReference type="ChEBI" id="CHEBI:18420"/>
    </ligand>
</feature>
<evidence type="ECO:0000255" key="1">
    <source>
        <dbReference type="HAMAP-Rule" id="MF_01595"/>
    </source>
</evidence>
<name>PNP_LEPIN</name>
<gene>
    <name evidence="1" type="primary">pnp</name>
    <name type="ordered locus">LA_0947</name>
</gene>
<sequence>MTHTISGQYGRDTIVLETGSWAKQAHGAVVYKSGNLVLLATVCAADEAKEGQDFFPLTCEYTEKLYSVGRFPGGYFKREAKPPEHEILISRIIDRPIRPLFPEGYFCEVQLQVQVLSADGDVSVAGHALNAASAALAVSDIPFNGPIAGARIGRVNGELILNPTTKEILNSDLDLVVAGTKTHIVMIEGEAKELSNEEMIAALRFAQKHIAEFVTLQEEYAKKIGVVKREVKLKVRDEELLSKVKEYAFAKLTTANQTPDKTARNKEISNVNKEVVEFFKDTIEDSDKIKDIKAYLHELEYEIVREQVLTKGTRFDGRKLDEIRSISVEINPLPGPHGSAVFTRGQTQSLGVVTLGTGSDNQRYETLEGQKEKSFMLHYNFPAFSVGEVRRSSGPGRREIGHGNLAERALKLVLPKPDEFPYVIRVVSEILESNGSSSMASVCSGSLALMAAGVPIQGSVSGIAMGLFSDSSGKYAVLSDIAGLEDHFGDMDCKIAGTRKGITAFQMDLKVTGVSFDVLESVFEQAQRGRFHILDIMEKHISKASSTLAGTAPRIIVRNIPKDRIGELIGPGGKNVRGISELTGAELYIEDDGKVTISGSNQESAEKAAKMVDGFFAEVEVGKIYEGKVKRIADFGAFVEILPGKEGLCHISKIDFKRVNSVKDIVKEGDIIRVKVLNVDKTGKIDLSRKDALEEEQV</sequence>
<organism>
    <name type="scientific">Leptospira interrogans serogroup Icterohaemorrhagiae serovar Lai (strain 56601)</name>
    <dbReference type="NCBI Taxonomy" id="189518"/>
    <lineage>
        <taxon>Bacteria</taxon>
        <taxon>Pseudomonadati</taxon>
        <taxon>Spirochaetota</taxon>
        <taxon>Spirochaetia</taxon>
        <taxon>Leptospirales</taxon>
        <taxon>Leptospiraceae</taxon>
        <taxon>Leptospira</taxon>
    </lineage>
</organism>
<comment type="function">
    <text evidence="1">Involved in mRNA degradation. Catalyzes the phosphorolysis of single-stranded polyribonucleotides processively in the 3'- to 5'-direction.</text>
</comment>
<comment type="catalytic activity">
    <reaction evidence="1">
        <text>RNA(n+1) + phosphate = RNA(n) + a ribonucleoside 5'-diphosphate</text>
        <dbReference type="Rhea" id="RHEA:22096"/>
        <dbReference type="Rhea" id="RHEA-COMP:14527"/>
        <dbReference type="Rhea" id="RHEA-COMP:17342"/>
        <dbReference type="ChEBI" id="CHEBI:43474"/>
        <dbReference type="ChEBI" id="CHEBI:57930"/>
        <dbReference type="ChEBI" id="CHEBI:140395"/>
        <dbReference type="EC" id="2.7.7.8"/>
    </reaction>
</comment>
<comment type="cofactor">
    <cofactor evidence="1">
        <name>Mg(2+)</name>
        <dbReference type="ChEBI" id="CHEBI:18420"/>
    </cofactor>
</comment>
<comment type="subcellular location">
    <subcellularLocation>
        <location evidence="1">Cytoplasm</location>
    </subcellularLocation>
</comment>
<comment type="similarity">
    <text evidence="1">Belongs to the polyribonucleotide nucleotidyltransferase family.</text>
</comment>
<dbReference type="EC" id="2.7.7.8" evidence="1"/>
<dbReference type="EMBL" id="AE010300">
    <property type="protein sequence ID" value="AAN48146.1"/>
    <property type="molecule type" value="Genomic_DNA"/>
</dbReference>
<dbReference type="RefSeq" id="NP_711128.1">
    <property type="nucleotide sequence ID" value="NC_004342.2"/>
</dbReference>
<dbReference type="RefSeq" id="WP_000149893.1">
    <property type="nucleotide sequence ID" value="NC_004342.2"/>
</dbReference>
<dbReference type="SMR" id="Q8F7J8"/>
<dbReference type="FunCoup" id="Q8F7J8">
    <property type="interactions" value="492"/>
</dbReference>
<dbReference type="STRING" id="189518.LA_0947"/>
<dbReference type="PaxDb" id="189518-LA_0947"/>
<dbReference type="EnsemblBacteria" id="AAN48146">
    <property type="protein sequence ID" value="AAN48146"/>
    <property type="gene ID" value="LA_0947"/>
</dbReference>
<dbReference type="GeneID" id="61142581"/>
<dbReference type="KEGG" id="lil:LA_0947"/>
<dbReference type="PATRIC" id="fig|189518.3.peg.949"/>
<dbReference type="HOGENOM" id="CLU_004217_2_2_12"/>
<dbReference type="InParanoid" id="Q8F7J8"/>
<dbReference type="OrthoDB" id="9804305at2"/>
<dbReference type="Proteomes" id="UP000001408">
    <property type="component" value="Chromosome I"/>
</dbReference>
<dbReference type="GO" id="GO:0005829">
    <property type="term" value="C:cytosol"/>
    <property type="evidence" value="ECO:0000318"/>
    <property type="project" value="GO_Central"/>
</dbReference>
<dbReference type="GO" id="GO:0000175">
    <property type="term" value="F:3'-5'-RNA exonuclease activity"/>
    <property type="evidence" value="ECO:0000318"/>
    <property type="project" value="GO_Central"/>
</dbReference>
<dbReference type="GO" id="GO:0000287">
    <property type="term" value="F:magnesium ion binding"/>
    <property type="evidence" value="ECO:0007669"/>
    <property type="project" value="UniProtKB-UniRule"/>
</dbReference>
<dbReference type="GO" id="GO:0004654">
    <property type="term" value="F:polyribonucleotide nucleotidyltransferase activity"/>
    <property type="evidence" value="ECO:0000318"/>
    <property type="project" value="GO_Central"/>
</dbReference>
<dbReference type="GO" id="GO:0003723">
    <property type="term" value="F:RNA binding"/>
    <property type="evidence" value="ECO:0007669"/>
    <property type="project" value="UniProtKB-UniRule"/>
</dbReference>
<dbReference type="GO" id="GO:0006402">
    <property type="term" value="P:mRNA catabolic process"/>
    <property type="evidence" value="ECO:0007669"/>
    <property type="project" value="UniProtKB-UniRule"/>
</dbReference>
<dbReference type="GO" id="GO:0006401">
    <property type="term" value="P:RNA catabolic process"/>
    <property type="evidence" value="ECO:0000318"/>
    <property type="project" value="GO_Central"/>
</dbReference>
<dbReference type="GO" id="GO:0006396">
    <property type="term" value="P:RNA processing"/>
    <property type="evidence" value="ECO:0007669"/>
    <property type="project" value="InterPro"/>
</dbReference>
<dbReference type="CDD" id="cd02393">
    <property type="entry name" value="KH-I_PNPase"/>
    <property type="match status" value="1"/>
</dbReference>
<dbReference type="CDD" id="cd11363">
    <property type="entry name" value="RNase_PH_PNPase_1"/>
    <property type="match status" value="1"/>
</dbReference>
<dbReference type="CDD" id="cd11364">
    <property type="entry name" value="RNase_PH_PNPase_2"/>
    <property type="match status" value="1"/>
</dbReference>
<dbReference type="CDD" id="cd04472">
    <property type="entry name" value="S1_PNPase"/>
    <property type="match status" value="1"/>
</dbReference>
<dbReference type="FunFam" id="2.40.50.140:FF:000023">
    <property type="entry name" value="Polyribonucleotide nucleotidyltransferase"/>
    <property type="match status" value="1"/>
</dbReference>
<dbReference type="FunFam" id="3.30.1370.10:FF:000001">
    <property type="entry name" value="Polyribonucleotide nucleotidyltransferase"/>
    <property type="match status" value="1"/>
</dbReference>
<dbReference type="FunFam" id="3.30.230.70:FF:000001">
    <property type="entry name" value="Polyribonucleotide nucleotidyltransferase"/>
    <property type="match status" value="1"/>
</dbReference>
<dbReference type="FunFam" id="3.30.230.70:FF:000013">
    <property type="entry name" value="Polyribonucleotide nucleotidyltransferase"/>
    <property type="match status" value="1"/>
</dbReference>
<dbReference type="Gene3D" id="3.30.230.70">
    <property type="entry name" value="GHMP Kinase, N-terminal domain"/>
    <property type="match status" value="2"/>
</dbReference>
<dbReference type="Gene3D" id="3.30.1370.10">
    <property type="entry name" value="K Homology domain, type 1"/>
    <property type="match status" value="1"/>
</dbReference>
<dbReference type="Gene3D" id="2.40.50.140">
    <property type="entry name" value="Nucleic acid-binding proteins"/>
    <property type="match status" value="1"/>
</dbReference>
<dbReference type="HAMAP" id="MF_01595">
    <property type="entry name" value="PNPase"/>
    <property type="match status" value="1"/>
</dbReference>
<dbReference type="InterPro" id="IPR001247">
    <property type="entry name" value="ExoRNase_PH_dom1"/>
</dbReference>
<dbReference type="InterPro" id="IPR015847">
    <property type="entry name" value="ExoRNase_PH_dom2"/>
</dbReference>
<dbReference type="InterPro" id="IPR036345">
    <property type="entry name" value="ExoRNase_PH_dom2_sf"/>
</dbReference>
<dbReference type="InterPro" id="IPR004087">
    <property type="entry name" value="KH_dom"/>
</dbReference>
<dbReference type="InterPro" id="IPR004088">
    <property type="entry name" value="KH_dom_type_1"/>
</dbReference>
<dbReference type="InterPro" id="IPR036612">
    <property type="entry name" value="KH_dom_type_1_sf"/>
</dbReference>
<dbReference type="InterPro" id="IPR012340">
    <property type="entry name" value="NA-bd_OB-fold"/>
</dbReference>
<dbReference type="InterPro" id="IPR012162">
    <property type="entry name" value="PNPase"/>
</dbReference>
<dbReference type="InterPro" id="IPR027408">
    <property type="entry name" value="PNPase/RNase_PH_dom_sf"/>
</dbReference>
<dbReference type="InterPro" id="IPR015848">
    <property type="entry name" value="PNPase_PH_RNA-bd_bac/org-type"/>
</dbReference>
<dbReference type="InterPro" id="IPR036456">
    <property type="entry name" value="PNPase_PH_RNA-bd_sf"/>
</dbReference>
<dbReference type="InterPro" id="IPR020568">
    <property type="entry name" value="Ribosomal_Su5_D2-typ_SF"/>
</dbReference>
<dbReference type="InterPro" id="IPR003029">
    <property type="entry name" value="S1_domain"/>
</dbReference>
<dbReference type="NCBIfam" id="TIGR03591">
    <property type="entry name" value="polynuc_phos"/>
    <property type="match status" value="1"/>
</dbReference>
<dbReference type="NCBIfam" id="NF008805">
    <property type="entry name" value="PRK11824.1"/>
    <property type="match status" value="1"/>
</dbReference>
<dbReference type="PANTHER" id="PTHR11252">
    <property type="entry name" value="POLYRIBONUCLEOTIDE NUCLEOTIDYLTRANSFERASE"/>
    <property type="match status" value="1"/>
</dbReference>
<dbReference type="PANTHER" id="PTHR11252:SF0">
    <property type="entry name" value="POLYRIBONUCLEOTIDE NUCLEOTIDYLTRANSFERASE 1, MITOCHONDRIAL"/>
    <property type="match status" value="1"/>
</dbReference>
<dbReference type="Pfam" id="PF00013">
    <property type="entry name" value="KH_1"/>
    <property type="match status" value="1"/>
</dbReference>
<dbReference type="Pfam" id="PF03726">
    <property type="entry name" value="PNPase"/>
    <property type="match status" value="1"/>
</dbReference>
<dbReference type="Pfam" id="PF01138">
    <property type="entry name" value="RNase_PH"/>
    <property type="match status" value="2"/>
</dbReference>
<dbReference type="Pfam" id="PF03725">
    <property type="entry name" value="RNase_PH_C"/>
    <property type="match status" value="1"/>
</dbReference>
<dbReference type="Pfam" id="PF00575">
    <property type="entry name" value="S1"/>
    <property type="match status" value="1"/>
</dbReference>
<dbReference type="PIRSF" id="PIRSF005499">
    <property type="entry name" value="PNPase"/>
    <property type="match status" value="1"/>
</dbReference>
<dbReference type="SMART" id="SM00322">
    <property type="entry name" value="KH"/>
    <property type="match status" value="1"/>
</dbReference>
<dbReference type="SMART" id="SM00316">
    <property type="entry name" value="S1"/>
    <property type="match status" value="1"/>
</dbReference>
<dbReference type="SUPFAM" id="SSF54791">
    <property type="entry name" value="Eukaryotic type KH-domain (KH-domain type I)"/>
    <property type="match status" value="1"/>
</dbReference>
<dbReference type="SUPFAM" id="SSF50249">
    <property type="entry name" value="Nucleic acid-binding proteins"/>
    <property type="match status" value="1"/>
</dbReference>
<dbReference type="SUPFAM" id="SSF46915">
    <property type="entry name" value="Polynucleotide phosphorylase/guanosine pentaphosphate synthase (PNPase/GPSI), domain 3"/>
    <property type="match status" value="1"/>
</dbReference>
<dbReference type="SUPFAM" id="SSF55666">
    <property type="entry name" value="Ribonuclease PH domain 2-like"/>
    <property type="match status" value="2"/>
</dbReference>
<dbReference type="SUPFAM" id="SSF54211">
    <property type="entry name" value="Ribosomal protein S5 domain 2-like"/>
    <property type="match status" value="2"/>
</dbReference>
<dbReference type="PROSITE" id="PS50084">
    <property type="entry name" value="KH_TYPE_1"/>
    <property type="match status" value="1"/>
</dbReference>
<dbReference type="PROSITE" id="PS50126">
    <property type="entry name" value="S1"/>
    <property type="match status" value="1"/>
</dbReference>
<keyword id="KW-0963">Cytoplasm</keyword>
<keyword id="KW-0460">Magnesium</keyword>
<keyword id="KW-0479">Metal-binding</keyword>
<keyword id="KW-0548">Nucleotidyltransferase</keyword>
<keyword id="KW-1185">Reference proteome</keyword>
<keyword id="KW-0694">RNA-binding</keyword>
<keyword id="KW-0808">Transferase</keyword>
<protein>
    <recommendedName>
        <fullName evidence="1">Polyribonucleotide nucleotidyltransferase</fullName>
        <ecNumber evidence="1">2.7.7.8</ecNumber>
    </recommendedName>
    <alternativeName>
        <fullName evidence="1">Polynucleotide phosphorylase</fullName>
        <shortName evidence="1">PNPase</shortName>
    </alternativeName>
</protein>
<reference key="1">
    <citation type="journal article" date="2003" name="Nature">
        <title>Unique physiological and pathogenic features of Leptospira interrogans revealed by whole-genome sequencing.</title>
        <authorList>
            <person name="Ren S.-X."/>
            <person name="Fu G."/>
            <person name="Jiang X.-G."/>
            <person name="Zeng R."/>
            <person name="Miao Y.-G."/>
            <person name="Xu H."/>
            <person name="Zhang Y.-X."/>
            <person name="Xiong H."/>
            <person name="Lu G."/>
            <person name="Lu L.-F."/>
            <person name="Jiang H.-Q."/>
            <person name="Jia J."/>
            <person name="Tu Y.-F."/>
            <person name="Jiang J.-X."/>
            <person name="Gu W.-Y."/>
            <person name="Zhang Y.-Q."/>
            <person name="Cai Z."/>
            <person name="Sheng H.-H."/>
            <person name="Yin H.-F."/>
            <person name="Zhang Y."/>
            <person name="Zhu G.-F."/>
            <person name="Wan M."/>
            <person name="Huang H.-L."/>
            <person name="Qian Z."/>
            <person name="Wang S.-Y."/>
            <person name="Ma W."/>
            <person name="Yao Z.-J."/>
            <person name="Shen Y."/>
            <person name="Qiang B.-Q."/>
            <person name="Xia Q.-C."/>
            <person name="Guo X.-K."/>
            <person name="Danchin A."/>
            <person name="Saint Girons I."/>
            <person name="Somerville R.L."/>
            <person name="Wen Y.-M."/>
            <person name="Shi M.-H."/>
            <person name="Chen Z."/>
            <person name="Xu J.-G."/>
            <person name="Zhao G.-P."/>
        </authorList>
    </citation>
    <scope>NUCLEOTIDE SEQUENCE [LARGE SCALE GENOMIC DNA]</scope>
    <source>
        <strain>56601</strain>
    </source>
</reference>